<name>SYA_PECAS</name>
<proteinExistence type="inferred from homology"/>
<dbReference type="EC" id="6.1.1.7" evidence="1"/>
<dbReference type="EMBL" id="BX950851">
    <property type="protein sequence ID" value="CAG76265.1"/>
    <property type="molecule type" value="Genomic_DNA"/>
</dbReference>
<dbReference type="RefSeq" id="WP_011094879.1">
    <property type="nucleotide sequence ID" value="NC_004547.2"/>
</dbReference>
<dbReference type="SMR" id="Q6D1T0"/>
<dbReference type="STRING" id="218491.ECA3367"/>
<dbReference type="KEGG" id="eca:ECA3367"/>
<dbReference type="PATRIC" id="fig|218491.5.peg.3421"/>
<dbReference type="eggNOG" id="COG0013">
    <property type="taxonomic scope" value="Bacteria"/>
</dbReference>
<dbReference type="HOGENOM" id="CLU_004485_1_1_6"/>
<dbReference type="OrthoDB" id="9803884at2"/>
<dbReference type="Proteomes" id="UP000007966">
    <property type="component" value="Chromosome"/>
</dbReference>
<dbReference type="GO" id="GO:0005829">
    <property type="term" value="C:cytosol"/>
    <property type="evidence" value="ECO:0007669"/>
    <property type="project" value="TreeGrafter"/>
</dbReference>
<dbReference type="GO" id="GO:0004813">
    <property type="term" value="F:alanine-tRNA ligase activity"/>
    <property type="evidence" value="ECO:0007669"/>
    <property type="project" value="UniProtKB-UniRule"/>
</dbReference>
<dbReference type="GO" id="GO:0002161">
    <property type="term" value="F:aminoacyl-tRNA deacylase activity"/>
    <property type="evidence" value="ECO:0007669"/>
    <property type="project" value="TreeGrafter"/>
</dbReference>
<dbReference type="GO" id="GO:0005524">
    <property type="term" value="F:ATP binding"/>
    <property type="evidence" value="ECO:0007669"/>
    <property type="project" value="UniProtKB-UniRule"/>
</dbReference>
<dbReference type="GO" id="GO:0000049">
    <property type="term" value="F:tRNA binding"/>
    <property type="evidence" value="ECO:0007669"/>
    <property type="project" value="UniProtKB-KW"/>
</dbReference>
<dbReference type="GO" id="GO:0008270">
    <property type="term" value="F:zinc ion binding"/>
    <property type="evidence" value="ECO:0007669"/>
    <property type="project" value="UniProtKB-UniRule"/>
</dbReference>
<dbReference type="GO" id="GO:0006419">
    <property type="term" value="P:alanyl-tRNA aminoacylation"/>
    <property type="evidence" value="ECO:0007669"/>
    <property type="project" value="UniProtKB-UniRule"/>
</dbReference>
<dbReference type="GO" id="GO:0045892">
    <property type="term" value="P:negative regulation of DNA-templated transcription"/>
    <property type="evidence" value="ECO:0007669"/>
    <property type="project" value="TreeGrafter"/>
</dbReference>
<dbReference type="CDD" id="cd00673">
    <property type="entry name" value="AlaRS_core"/>
    <property type="match status" value="1"/>
</dbReference>
<dbReference type="FunFam" id="2.40.30.130:FF:000001">
    <property type="entry name" value="Alanine--tRNA ligase"/>
    <property type="match status" value="1"/>
</dbReference>
<dbReference type="FunFam" id="3.10.310.40:FF:000001">
    <property type="entry name" value="Alanine--tRNA ligase"/>
    <property type="match status" value="1"/>
</dbReference>
<dbReference type="FunFam" id="3.30.54.20:FF:000001">
    <property type="entry name" value="Alanine--tRNA ligase"/>
    <property type="match status" value="1"/>
</dbReference>
<dbReference type="FunFam" id="3.30.930.10:FF:000004">
    <property type="entry name" value="Alanine--tRNA ligase"/>
    <property type="match status" value="1"/>
</dbReference>
<dbReference type="FunFam" id="3.30.980.10:FF:000004">
    <property type="entry name" value="Alanine--tRNA ligase, cytoplasmic"/>
    <property type="match status" value="1"/>
</dbReference>
<dbReference type="Gene3D" id="2.40.30.130">
    <property type="match status" value="1"/>
</dbReference>
<dbReference type="Gene3D" id="3.10.310.40">
    <property type="match status" value="1"/>
</dbReference>
<dbReference type="Gene3D" id="3.30.54.20">
    <property type="match status" value="1"/>
</dbReference>
<dbReference type="Gene3D" id="6.10.250.550">
    <property type="match status" value="1"/>
</dbReference>
<dbReference type="Gene3D" id="3.30.930.10">
    <property type="entry name" value="Bira Bifunctional Protein, Domain 2"/>
    <property type="match status" value="1"/>
</dbReference>
<dbReference type="Gene3D" id="3.30.980.10">
    <property type="entry name" value="Threonyl-trna Synthetase, Chain A, domain 2"/>
    <property type="match status" value="1"/>
</dbReference>
<dbReference type="HAMAP" id="MF_00036_B">
    <property type="entry name" value="Ala_tRNA_synth_B"/>
    <property type="match status" value="1"/>
</dbReference>
<dbReference type="InterPro" id="IPR045864">
    <property type="entry name" value="aa-tRNA-synth_II/BPL/LPL"/>
</dbReference>
<dbReference type="InterPro" id="IPR002318">
    <property type="entry name" value="Ala-tRNA-lgiase_IIc"/>
</dbReference>
<dbReference type="InterPro" id="IPR018162">
    <property type="entry name" value="Ala-tRNA-ligase_IIc_anticod-bd"/>
</dbReference>
<dbReference type="InterPro" id="IPR018165">
    <property type="entry name" value="Ala-tRNA-synth_IIc_core"/>
</dbReference>
<dbReference type="InterPro" id="IPR018164">
    <property type="entry name" value="Ala-tRNA-synth_IIc_N"/>
</dbReference>
<dbReference type="InterPro" id="IPR050058">
    <property type="entry name" value="Ala-tRNA_ligase"/>
</dbReference>
<dbReference type="InterPro" id="IPR023033">
    <property type="entry name" value="Ala_tRNA_ligase_euk/bac"/>
</dbReference>
<dbReference type="InterPro" id="IPR003156">
    <property type="entry name" value="DHHA1_dom"/>
</dbReference>
<dbReference type="InterPro" id="IPR018163">
    <property type="entry name" value="Thr/Ala-tRNA-synth_IIc_edit"/>
</dbReference>
<dbReference type="InterPro" id="IPR009000">
    <property type="entry name" value="Transl_B-barrel_sf"/>
</dbReference>
<dbReference type="InterPro" id="IPR012947">
    <property type="entry name" value="tRNA_SAD"/>
</dbReference>
<dbReference type="NCBIfam" id="TIGR00344">
    <property type="entry name" value="alaS"/>
    <property type="match status" value="1"/>
</dbReference>
<dbReference type="PANTHER" id="PTHR11777:SF9">
    <property type="entry name" value="ALANINE--TRNA LIGASE, CYTOPLASMIC"/>
    <property type="match status" value="1"/>
</dbReference>
<dbReference type="PANTHER" id="PTHR11777">
    <property type="entry name" value="ALANYL-TRNA SYNTHETASE"/>
    <property type="match status" value="1"/>
</dbReference>
<dbReference type="Pfam" id="PF02272">
    <property type="entry name" value="DHHA1"/>
    <property type="match status" value="1"/>
</dbReference>
<dbReference type="Pfam" id="PF01411">
    <property type="entry name" value="tRNA-synt_2c"/>
    <property type="match status" value="1"/>
</dbReference>
<dbReference type="Pfam" id="PF07973">
    <property type="entry name" value="tRNA_SAD"/>
    <property type="match status" value="1"/>
</dbReference>
<dbReference type="PRINTS" id="PR00980">
    <property type="entry name" value="TRNASYNTHALA"/>
</dbReference>
<dbReference type="SMART" id="SM00863">
    <property type="entry name" value="tRNA_SAD"/>
    <property type="match status" value="1"/>
</dbReference>
<dbReference type="SUPFAM" id="SSF55681">
    <property type="entry name" value="Class II aaRS and biotin synthetases"/>
    <property type="match status" value="1"/>
</dbReference>
<dbReference type="SUPFAM" id="SSF101353">
    <property type="entry name" value="Putative anticodon-binding domain of alanyl-tRNA synthetase (AlaRS)"/>
    <property type="match status" value="1"/>
</dbReference>
<dbReference type="SUPFAM" id="SSF55186">
    <property type="entry name" value="ThrRS/AlaRS common domain"/>
    <property type="match status" value="1"/>
</dbReference>
<dbReference type="SUPFAM" id="SSF50447">
    <property type="entry name" value="Translation proteins"/>
    <property type="match status" value="1"/>
</dbReference>
<dbReference type="PROSITE" id="PS50860">
    <property type="entry name" value="AA_TRNA_LIGASE_II_ALA"/>
    <property type="match status" value="1"/>
</dbReference>
<evidence type="ECO:0000255" key="1">
    <source>
        <dbReference type="HAMAP-Rule" id="MF_00036"/>
    </source>
</evidence>
<comment type="function">
    <text evidence="1">Catalyzes the attachment of alanine to tRNA(Ala) in a two-step reaction: alanine is first activated by ATP to form Ala-AMP and then transferred to the acceptor end of tRNA(Ala). Also edits incorrectly charged Ser-tRNA(Ala) and Gly-tRNA(Ala) via its editing domain.</text>
</comment>
<comment type="catalytic activity">
    <reaction evidence="1">
        <text>tRNA(Ala) + L-alanine + ATP = L-alanyl-tRNA(Ala) + AMP + diphosphate</text>
        <dbReference type="Rhea" id="RHEA:12540"/>
        <dbReference type="Rhea" id="RHEA-COMP:9657"/>
        <dbReference type="Rhea" id="RHEA-COMP:9923"/>
        <dbReference type="ChEBI" id="CHEBI:30616"/>
        <dbReference type="ChEBI" id="CHEBI:33019"/>
        <dbReference type="ChEBI" id="CHEBI:57972"/>
        <dbReference type="ChEBI" id="CHEBI:78442"/>
        <dbReference type="ChEBI" id="CHEBI:78497"/>
        <dbReference type="ChEBI" id="CHEBI:456215"/>
        <dbReference type="EC" id="6.1.1.7"/>
    </reaction>
</comment>
<comment type="cofactor">
    <cofactor evidence="1">
        <name>Zn(2+)</name>
        <dbReference type="ChEBI" id="CHEBI:29105"/>
    </cofactor>
    <text evidence="1">Binds 1 zinc ion per subunit.</text>
</comment>
<comment type="subunit">
    <text evidence="1">Homotetramer.</text>
</comment>
<comment type="subcellular location">
    <subcellularLocation>
        <location evidence="1">Cytoplasm</location>
    </subcellularLocation>
</comment>
<comment type="domain">
    <text evidence="1">Consists of three domains; the N-terminal catalytic domain, the editing domain and the C-terminal C-Ala domain. The editing domain removes incorrectly charged amino acids, while the C-Ala domain, along with tRNA(Ala), serves as a bridge to cooperatively bring together the editing and aminoacylation centers thus stimulating deacylation of misacylated tRNAs.</text>
</comment>
<comment type="similarity">
    <text evidence="1">Belongs to the class-II aminoacyl-tRNA synthetase family.</text>
</comment>
<feature type="chain" id="PRO_0000075112" description="Alanine--tRNA ligase">
    <location>
        <begin position="1"/>
        <end position="875"/>
    </location>
</feature>
<feature type="binding site" evidence="1">
    <location>
        <position position="564"/>
    </location>
    <ligand>
        <name>Zn(2+)</name>
        <dbReference type="ChEBI" id="CHEBI:29105"/>
    </ligand>
</feature>
<feature type="binding site" evidence="1">
    <location>
        <position position="568"/>
    </location>
    <ligand>
        <name>Zn(2+)</name>
        <dbReference type="ChEBI" id="CHEBI:29105"/>
    </ligand>
</feature>
<feature type="binding site" evidence="1">
    <location>
        <position position="666"/>
    </location>
    <ligand>
        <name>Zn(2+)</name>
        <dbReference type="ChEBI" id="CHEBI:29105"/>
    </ligand>
</feature>
<feature type="binding site" evidence="1">
    <location>
        <position position="670"/>
    </location>
    <ligand>
        <name>Zn(2+)</name>
        <dbReference type="ChEBI" id="CHEBI:29105"/>
    </ligand>
</feature>
<protein>
    <recommendedName>
        <fullName evidence="1">Alanine--tRNA ligase</fullName>
        <ecNumber evidence="1">6.1.1.7</ecNumber>
    </recommendedName>
    <alternativeName>
        <fullName evidence="1">Alanyl-tRNA synthetase</fullName>
        <shortName evidence="1">AlaRS</shortName>
    </alternativeName>
</protein>
<accession>Q6D1T0</accession>
<keyword id="KW-0030">Aminoacyl-tRNA synthetase</keyword>
<keyword id="KW-0067">ATP-binding</keyword>
<keyword id="KW-0963">Cytoplasm</keyword>
<keyword id="KW-0436">Ligase</keyword>
<keyword id="KW-0479">Metal-binding</keyword>
<keyword id="KW-0547">Nucleotide-binding</keyword>
<keyword id="KW-0648">Protein biosynthesis</keyword>
<keyword id="KW-1185">Reference proteome</keyword>
<keyword id="KW-0694">RNA-binding</keyword>
<keyword id="KW-0820">tRNA-binding</keyword>
<keyword id="KW-0862">Zinc</keyword>
<organism>
    <name type="scientific">Pectobacterium atrosepticum (strain SCRI 1043 / ATCC BAA-672)</name>
    <name type="common">Erwinia carotovora subsp. atroseptica</name>
    <dbReference type="NCBI Taxonomy" id="218491"/>
    <lineage>
        <taxon>Bacteria</taxon>
        <taxon>Pseudomonadati</taxon>
        <taxon>Pseudomonadota</taxon>
        <taxon>Gammaproteobacteria</taxon>
        <taxon>Enterobacterales</taxon>
        <taxon>Pectobacteriaceae</taxon>
        <taxon>Pectobacterium</taxon>
    </lineage>
</organism>
<sequence length="875" mass="95964">MSKSTAEIRQAFLDFFHSKGHQVVDSSSLVPNNDPTLLFTNAGMNQFKDVFLGLDKRSYVRATTSQRCVRAGGKHNDLENVGYTARHHTFFEMLGNFSFGDYFKHDAIRYAWELLTSPQWFNLPKEKLWVTVYATDDEAYGIWADEVGVPRERIIRIGDNKGGPYASDNFWQMGETGPCGPCTEIFFDHGEHIAGGPPGSPDEDGDRYIEIWNLVFMQFNRQVDGTMLPLPKPSVDTGMGLERVSAVLQHVNSNYDIDLFKTLIDAVAKAVGTTDLTNKSLRVIADHIRSCAFLISDGVMPSNENRGYVLRRIIRRAARHGNMLGATDAFFYKLVAPLIEVMGPAAEELKKQQSVVEQALKMEEEQFARTLERGLSLLDEEIKNLKGDTLDGETAFRLYDTYGFPVDLTADVCRERGLKVDEEGFEAAMTAQRQRARDASGFGVDYNSLIRVDENTPFCGYEKTQQQAKVIALYHNGNAVDQIAAGDEAVVILNETPFYGESGGQVGDQGELKNAGVSFAVQDTQKYGQAIGHVGKLTQGMLRVNDSVDANVDSQRRDRIRLNHSATHLLHAALRQVLGVHVAQKGSLVNDSYLRFDFSHTEAMKPEQIRQVEDIVNAQIRRNLTVQTDVMALDDARAKGAMALFGEKYDDHVRVLSMGDFSIELCGGTHASRTGDIGLFQIISESGTAAGVRRIEATTGENALSALHRQSDVLQDIAQLLKGDSHNLTDKVRSVLDRSRALEKELQQLKAQQAAQESSSLSGKATEINGVKLLVTQLDNVDPKLLRTMVDDLKNQLGSAVIVLGTAAEGRVSLISGVTKDLTDRVKAGELVGFVAQQVGGKGGGRPDMAQAGGSDVSALPAALASVESWVAAKL</sequence>
<reference key="1">
    <citation type="journal article" date="2004" name="Proc. Natl. Acad. Sci. U.S.A.">
        <title>Genome sequence of the enterobacterial phytopathogen Erwinia carotovora subsp. atroseptica and characterization of virulence factors.</title>
        <authorList>
            <person name="Bell K.S."/>
            <person name="Sebaihia M."/>
            <person name="Pritchard L."/>
            <person name="Holden M.T.G."/>
            <person name="Hyman L.J."/>
            <person name="Holeva M.C."/>
            <person name="Thomson N.R."/>
            <person name="Bentley S.D."/>
            <person name="Churcher L.J.C."/>
            <person name="Mungall K."/>
            <person name="Atkin R."/>
            <person name="Bason N."/>
            <person name="Brooks K."/>
            <person name="Chillingworth T."/>
            <person name="Clark K."/>
            <person name="Doggett J."/>
            <person name="Fraser A."/>
            <person name="Hance Z."/>
            <person name="Hauser H."/>
            <person name="Jagels K."/>
            <person name="Moule S."/>
            <person name="Norbertczak H."/>
            <person name="Ormond D."/>
            <person name="Price C."/>
            <person name="Quail M.A."/>
            <person name="Sanders M."/>
            <person name="Walker D."/>
            <person name="Whitehead S."/>
            <person name="Salmond G.P.C."/>
            <person name="Birch P.R.J."/>
            <person name="Parkhill J."/>
            <person name="Toth I.K."/>
        </authorList>
    </citation>
    <scope>NUCLEOTIDE SEQUENCE [LARGE SCALE GENOMIC DNA]</scope>
    <source>
        <strain>SCRI 1043 / ATCC BAA-672</strain>
    </source>
</reference>
<gene>
    <name evidence="1" type="primary">alaS</name>
    <name type="ordered locus">ECA3367</name>
</gene>